<evidence type="ECO:0000250" key="1"/>
<evidence type="ECO:0000256" key="2">
    <source>
        <dbReference type="SAM" id="MobiDB-lite"/>
    </source>
</evidence>
<evidence type="ECO:0000305" key="3"/>
<sequence length="133" mass="14092">MTGGKSGGKASGSKNAQSRSSKAGLAFPVGRVHRLLRKGNYAQRVGAGAPVYLAAVLEYLAAEILELAGNAARDNKKTRIIPRHLQLAIRNDEELNKLLGHVTIAQGGVLPNIHQNLLPKKTPKSGKGPSQEL</sequence>
<keyword id="KW-0007">Acetylation</keyword>
<keyword id="KW-0158">Chromosome</keyword>
<keyword id="KW-0227">DNA damage</keyword>
<keyword id="KW-0234">DNA repair</keyword>
<keyword id="KW-0238">DNA-binding</keyword>
<keyword id="KW-0488">Methylation</keyword>
<keyword id="KW-0544">Nucleosome core</keyword>
<keyword id="KW-0539">Nucleus</keyword>
<keyword id="KW-0597">Phosphoprotein</keyword>
<keyword id="KW-1185">Reference proteome</keyword>
<comment type="function">
    <text>Core component of nucleosome which plays a central role in DNA double strand break (DSB) repair. Nucleosomes wrap and compact DNA into chromatin, limiting DNA accessibility to the cellular machineries which require DNA as a template. Histones thereby play a central role in transcription regulation, DNA repair, DNA replication and chromosomal stability. DNA accessibility is regulated via a complex set of post-translational modifications of histones, also called histone code, and nucleosome remodeling.</text>
</comment>
<comment type="subunit">
    <text>The nucleosome is a histone octamer containing two molecules each of H2A, H2B, H3 and H4 assembled in one H3-H4 heterotetramer and two H2A-H2B heterodimers. The octamer wraps approximately 147 bp of DNA.</text>
</comment>
<comment type="subcellular location">
    <subcellularLocation>
        <location>Nucleus</location>
    </subcellularLocation>
    <subcellularLocation>
        <location>Chromosome</location>
    </subcellularLocation>
</comment>
<comment type="domain">
    <text>The [ST]-Q motif constitutes a recognition sequence for kinases from the PI3/PI4-kinase family.</text>
</comment>
<comment type="PTM">
    <text evidence="1">Phosphorylated to form H2AS128ph (gamma-H2A) in response to DNA double-strand breaks (DSBs) generated by exogenous genotoxic agents and by stalled replication forks. Phosphorylation is dependent on the DNA damage checkpoint kinases mec1/ATR and tel1/ATM, spreads on either side of a detected DSB site and may mark the surrounding chromatin for recruitment of proteins required for DNA damage signaling and repair. Gamma-H2A is removed from the DNA prior to the strand invasion-primer extension step of the repair process and subsequently dephosphorylated. Dephosphorylation is necessary for efficient recovery from the DNA damage checkpoint (By similarity).</text>
</comment>
<comment type="PTM">
    <text evidence="1">Acetylated by esa1 to form H2AK4ac and H2AK7ac.</text>
</comment>
<comment type="miscellaneous">
    <text evidence="3">In contrast to vertebrates and insects, its C-terminus is not monoubiquitinated.</text>
</comment>
<comment type="similarity">
    <text evidence="3">Belongs to the histone H2A family.</text>
</comment>
<comment type="caution">
    <text evidence="3">To ensure consistency between histone entries, we follow the 'Brno' nomenclature for histone modifications, with positions referring to those used in the literature for the 'closest' model organism. Due to slight variations in histone sequences between organisms and to the presence of initiator methionine in UniProtKB/Swiss-Prot sequences, the actual positions of modified amino acids in the sequence generally differ. In this entry the following conventions are used: H2AK4ac = acetylated Lys-5; H2AK7ac = acetylated Lys-9; H2AS128ph = phosphorylated Ser-130.</text>
</comment>
<reference key="1">
    <citation type="journal article" date="2008" name="PLoS Genet.">
        <title>Genomic islands in the pathogenic filamentous fungus Aspergillus fumigatus.</title>
        <authorList>
            <person name="Fedorova N.D."/>
            <person name="Khaldi N."/>
            <person name="Joardar V.S."/>
            <person name="Maiti R."/>
            <person name="Amedeo P."/>
            <person name="Anderson M.J."/>
            <person name="Crabtree J."/>
            <person name="Silva J.C."/>
            <person name="Badger J.H."/>
            <person name="Albarraq A."/>
            <person name="Angiuoli S."/>
            <person name="Bussey H."/>
            <person name="Bowyer P."/>
            <person name="Cotty P.J."/>
            <person name="Dyer P.S."/>
            <person name="Egan A."/>
            <person name="Galens K."/>
            <person name="Fraser-Liggett C.M."/>
            <person name="Haas B.J."/>
            <person name="Inman J.M."/>
            <person name="Kent R."/>
            <person name="Lemieux S."/>
            <person name="Malavazi I."/>
            <person name="Orvis J."/>
            <person name="Roemer T."/>
            <person name="Ronning C.M."/>
            <person name="Sundaram J.P."/>
            <person name="Sutton G."/>
            <person name="Turner G."/>
            <person name="Venter J.C."/>
            <person name="White O.R."/>
            <person name="Whitty B.R."/>
            <person name="Youngman P."/>
            <person name="Wolfe K.H."/>
            <person name="Goldman G.H."/>
            <person name="Wortman J.R."/>
            <person name="Jiang B."/>
            <person name="Denning D.W."/>
            <person name="Nierman W.C."/>
        </authorList>
    </citation>
    <scope>NUCLEOTIDE SEQUENCE [LARGE SCALE GENOMIC DNA]</scope>
    <source>
        <strain>ATCC 1020 / DSM 3700 / CBS 544.65 / FGSC A1164 / JCM 1740 / NRRL 181 / WB 181</strain>
    </source>
</reference>
<gene>
    <name type="primary">hta1</name>
    <name type="ORF">NFIA_071830</name>
</gene>
<organism>
    <name type="scientific">Neosartorya fischeri (strain ATCC 1020 / DSM 3700 / CBS 544.65 / FGSC A1164 / JCM 1740 / NRRL 181 / WB 181)</name>
    <name type="common">Aspergillus fischerianus</name>
    <dbReference type="NCBI Taxonomy" id="331117"/>
    <lineage>
        <taxon>Eukaryota</taxon>
        <taxon>Fungi</taxon>
        <taxon>Dikarya</taxon>
        <taxon>Ascomycota</taxon>
        <taxon>Pezizomycotina</taxon>
        <taxon>Eurotiomycetes</taxon>
        <taxon>Eurotiomycetidae</taxon>
        <taxon>Eurotiales</taxon>
        <taxon>Aspergillaceae</taxon>
        <taxon>Aspergillus</taxon>
        <taxon>Aspergillus subgen. Fumigati</taxon>
    </lineage>
</organism>
<feature type="initiator methionine" description="Removed" evidence="1">
    <location>
        <position position="1"/>
    </location>
</feature>
<feature type="chain" id="PRO_0000297736" description="Histone H2A">
    <location>
        <begin position="2"/>
        <end position="133"/>
    </location>
</feature>
<feature type="region of interest" description="Disordered" evidence="2">
    <location>
        <begin position="1"/>
        <end position="24"/>
    </location>
</feature>
<feature type="short sequence motif" description="[ST]-Q motif">
    <location>
        <begin position="130"/>
        <end position="131"/>
    </location>
</feature>
<feature type="compositionally biased region" description="Gly residues" evidence="2">
    <location>
        <begin position="1"/>
        <end position="10"/>
    </location>
</feature>
<feature type="site" description="Not ubiquitinated" evidence="3">
    <location>
        <position position="120"/>
    </location>
</feature>
<feature type="modified residue" description="N6-acetyllysine" evidence="1">
    <location>
        <position position="5"/>
    </location>
</feature>
<feature type="modified residue" description="N6-acetyllysine" evidence="1">
    <location>
        <position position="9"/>
    </location>
</feature>
<feature type="modified residue" description="N5-methylglutamine" evidence="1">
    <location>
        <position position="106"/>
    </location>
</feature>
<feature type="modified residue" description="Phosphoserine" evidence="1">
    <location>
        <position position="130"/>
    </location>
</feature>
<name>H2A_NEOFI</name>
<proteinExistence type="inferred from homology"/>
<dbReference type="EMBL" id="DS027690">
    <property type="protein sequence ID" value="EAW22012.1"/>
    <property type="molecule type" value="Genomic_DNA"/>
</dbReference>
<dbReference type="RefSeq" id="XP_001263909.1">
    <property type="nucleotide sequence ID" value="XM_001263908.1"/>
</dbReference>
<dbReference type="SMR" id="A1D8G8"/>
<dbReference type="STRING" id="331117.A1D8G8"/>
<dbReference type="EnsemblFungi" id="EAW22012">
    <property type="protein sequence ID" value="EAW22012"/>
    <property type="gene ID" value="NFIA_071830"/>
</dbReference>
<dbReference type="GeneID" id="4590555"/>
<dbReference type="KEGG" id="nfi:NFIA_071830"/>
<dbReference type="VEuPathDB" id="FungiDB:NFIA_071830"/>
<dbReference type="eggNOG" id="KOG1756">
    <property type="taxonomic scope" value="Eukaryota"/>
</dbReference>
<dbReference type="HOGENOM" id="CLU_062828_3_0_1"/>
<dbReference type="OMA" id="CALESQH"/>
<dbReference type="OrthoDB" id="9421954at2759"/>
<dbReference type="Proteomes" id="UP000006702">
    <property type="component" value="Unassembled WGS sequence"/>
</dbReference>
<dbReference type="GO" id="GO:0000786">
    <property type="term" value="C:nucleosome"/>
    <property type="evidence" value="ECO:0007669"/>
    <property type="project" value="UniProtKB-KW"/>
</dbReference>
<dbReference type="GO" id="GO:0005634">
    <property type="term" value="C:nucleus"/>
    <property type="evidence" value="ECO:0007669"/>
    <property type="project" value="UniProtKB-SubCell"/>
</dbReference>
<dbReference type="GO" id="GO:0003677">
    <property type="term" value="F:DNA binding"/>
    <property type="evidence" value="ECO:0007669"/>
    <property type="project" value="UniProtKB-KW"/>
</dbReference>
<dbReference type="GO" id="GO:0046982">
    <property type="term" value="F:protein heterodimerization activity"/>
    <property type="evidence" value="ECO:0007669"/>
    <property type="project" value="InterPro"/>
</dbReference>
<dbReference type="GO" id="GO:0030527">
    <property type="term" value="F:structural constituent of chromatin"/>
    <property type="evidence" value="ECO:0007669"/>
    <property type="project" value="InterPro"/>
</dbReference>
<dbReference type="GO" id="GO:0006281">
    <property type="term" value="P:DNA repair"/>
    <property type="evidence" value="ECO:0007669"/>
    <property type="project" value="UniProtKB-KW"/>
</dbReference>
<dbReference type="CDD" id="cd00074">
    <property type="entry name" value="HFD_H2A"/>
    <property type="match status" value="1"/>
</dbReference>
<dbReference type="FunFam" id="1.10.20.10:FF:000008">
    <property type="entry name" value="Histone H2A"/>
    <property type="match status" value="1"/>
</dbReference>
<dbReference type="Gene3D" id="1.10.20.10">
    <property type="entry name" value="Histone, subunit A"/>
    <property type="match status" value="1"/>
</dbReference>
<dbReference type="InterPro" id="IPR009072">
    <property type="entry name" value="Histone-fold"/>
</dbReference>
<dbReference type="InterPro" id="IPR002119">
    <property type="entry name" value="Histone_H2A"/>
</dbReference>
<dbReference type="InterPro" id="IPR007125">
    <property type="entry name" value="Histone_H2A/H2B/H3"/>
</dbReference>
<dbReference type="InterPro" id="IPR032454">
    <property type="entry name" value="Histone_H2A_C"/>
</dbReference>
<dbReference type="InterPro" id="IPR032458">
    <property type="entry name" value="Histone_H2A_CS"/>
</dbReference>
<dbReference type="PANTHER" id="PTHR23430">
    <property type="entry name" value="HISTONE H2A"/>
    <property type="match status" value="1"/>
</dbReference>
<dbReference type="Pfam" id="PF00125">
    <property type="entry name" value="Histone"/>
    <property type="match status" value="1"/>
</dbReference>
<dbReference type="Pfam" id="PF16211">
    <property type="entry name" value="Histone_H2A_C"/>
    <property type="match status" value="1"/>
</dbReference>
<dbReference type="PRINTS" id="PR00620">
    <property type="entry name" value="HISTONEH2A"/>
</dbReference>
<dbReference type="SMART" id="SM00414">
    <property type="entry name" value="H2A"/>
    <property type="match status" value="1"/>
</dbReference>
<dbReference type="SUPFAM" id="SSF47113">
    <property type="entry name" value="Histone-fold"/>
    <property type="match status" value="1"/>
</dbReference>
<dbReference type="PROSITE" id="PS00046">
    <property type="entry name" value="HISTONE_H2A"/>
    <property type="match status" value="1"/>
</dbReference>
<accession>A1D8G8</accession>
<protein>
    <recommendedName>
        <fullName>Histone H2A</fullName>
    </recommendedName>
</protein>